<reference key="1">
    <citation type="journal article" date="2003" name="Genome Res.">
        <title>Comparative genome analysis of Vibrio vulnificus, a marine pathogen.</title>
        <authorList>
            <person name="Chen C.-Y."/>
            <person name="Wu K.-M."/>
            <person name="Chang Y.-C."/>
            <person name="Chang C.-H."/>
            <person name="Tsai H.-C."/>
            <person name="Liao T.-L."/>
            <person name="Liu Y.-M."/>
            <person name="Chen H.-J."/>
            <person name="Shen A.B.-T."/>
            <person name="Li J.-C."/>
            <person name="Su T.-L."/>
            <person name="Shao C.-P."/>
            <person name="Lee C.-T."/>
            <person name="Hor L.-I."/>
            <person name="Tsai S.-F."/>
        </authorList>
    </citation>
    <scope>NUCLEOTIDE SEQUENCE [LARGE SCALE GENOMIC DNA]</scope>
    <source>
        <strain>YJ016</strain>
    </source>
</reference>
<protein>
    <recommendedName>
        <fullName evidence="1">Tryptophanase</fullName>
        <ecNumber evidence="1">4.1.99.1</ecNumber>
    </recommendedName>
    <alternativeName>
        <fullName evidence="1">L-tryptophan indole-lyase</fullName>
        <shortName evidence="1">TNase</shortName>
    </alternativeName>
</protein>
<gene>
    <name evidence="1" type="primary">tnaA</name>
    <name type="ordered locus">VVA1325</name>
</gene>
<organism>
    <name type="scientific">Vibrio vulnificus (strain YJ016)</name>
    <dbReference type="NCBI Taxonomy" id="196600"/>
    <lineage>
        <taxon>Bacteria</taxon>
        <taxon>Pseudomonadati</taxon>
        <taxon>Pseudomonadota</taxon>
        <taxon>Gammaproteobacteria</taxon>
        <taxon>Vibrionales</taxon>
        <taxon>Vibrionaceae</taxon>
        <taxon>Vibrio</taxon>
    </lineage>
</organism>
<name>TNAA_VIBVY</name>
<comment type="catalytic activity">
    <reaction evidence="1">
        <text>L-tryptophan + H2O = indole + pyruvate + NH4(+)</text>
        <dbReference type="Rhea" id="RHEA:19553"/>
        <dbReference type="ChEBI" id="CHEBI:15361"/>
        <dbReference type="ChEBI" id="CHEBI:15377"/>
        <dbReference type="ChEBI" id="CHEBI:16881"/>
        <dbReference type="ChEBI" id="CHEBI:28938"/>
        <dbReference type="ChEBI" id="CHEBI:57912"/>
        <dbReference type="EC" id="4.1.99.1"/>
    </reaction>
</comment>
<comment type="cofactor">
    <cofactor evidence="1">
        <name>pyridoxal 5'-phosphate</name>
        <dbReference type="ChEBI" id="CHEBI:597326"/>
    </cofactor>
</comment>
<comment type="pathway">
    <text evidence="1">Amino-acid degradation; L-tryptophan degradation via pyruvate pathway; indole and pyruvate from L-tryptophan: step 1/1.</text>
</comment>
<comment type="subunit">
    <text evidence="1">Homotetramer.</text>
</comment>
<comment type="similarity">
    <text evidence="1">Belongs to the beta-eliminating lyase family.</text>
</comment>
<proteinExistence type="inferred from homology"/>
<feature type="chain" id="PRO_0000195628" description="Tryptophanase">
    <location>
        <begin position="1"/>
        <end position="473"/>
    </location>
</feature>
<feature type="modified residue" description="N6-(pyridoxal phosphate)lysine" evidence="1">
    <location>
        <position position="270"/>
    </location>
</feature>
<accession>Q7MCR1</accession>
<dbReference type="EC" id="4.1.99.1" evidence="1"/>
<dbReference type="EMBL" id="BA000038">
    <property type="protein sequence ID" value="BAC97351.1"/>
    <property type="molecule type" value="Genomic_DNA"/>
</dbReference>
<dbReference type="RefSeq" id="WP_011081771.1">
    <property type="nucleotide sequence ID" value="NC_005140.1"/>
</dbReference>
<dbReference type="SMR" id="Q7MCR1"/>
<dbReference type="STRING" id="672.VV93_v1c42380"/>
<dbReference type="KEGG" id="vvy:VVA1325"/>
<dbReference type="eggNOG" id="COG3033">
    <property type="taxonomic scope" value="Bacteria"/>
</dbReference>
<dbReference type="HOGENOM" id="CLU_047223_0_0_6"/>
<dbReference type="UniPathway" id="UPA00332">
    <property type="reaction ID" value="UER00452"/>
</dbReference>
<dbReference type="Proteomes" id="UP000002675">
    <property type="component" value="Chromosome II"/>
</dbReference>
<dbReference type="GO" id="GO:0009034">
    <property type="term" value="F:tryptophanase activity"/>
    <property type="evidence" value="ECO:0007669"/>
    <property type="project" value="UniProtKB-UniRule"/>
</dbReference>
<dbReference type="FunFam" id="3.40.640.10:FF:000039">
    <property type="entry name" value="Tryptophanase"/>
    <property type="match status" value="1"/>
</dbReference>
<dbReference type="Gene3D" id="3.90.1150.10">
    <property type="entry name" value="Aspartate Aminotransferase, domain 1"/>
    <property type="match status" value="1"/>
</dbReference>
<dbReference type="Gene3D" id="3.40.640.10">
    <property type="entry name" value="Type I PLP-dependent aspartate aminotransferase-like (Major domain)"/>
    <property type="match status" value="1"/>
</dbReference>
<dbReference type="HAMAP" id="MF_00544">
    <property type="entry name" value="Tryptophanase"/>
    <property type="match status" value="1"/>
</dbReference>
<dbReference type="InterPro" id="IPR001597">
    <property type="entry name" value="ArAA_b-elim_lyase/Thr_aldolase"/>
</dbReference>
<dbReference type="InterPro" id="IPR011166">
    <property type="entry name" value="Beta-eliminating_lyase"/>
</dbReference>
<dbReference type="InterPro" id="IPR015424">
    <property type="entry name" value="PyrdxlP-dep_Trfase"/>
</dbReference>
<dbReference type="InterPro" id="IPR015421">
    <property type="entry name" value="PyrdxlP-dep_Trfase_major"/>
</dbReference>
<dbReference type="InterPro" id="IPR015422">
    <property type="entry name" value="PyrdxlP-dep_Trfase_small"/>
</dbReference>
<dbReference type="InterPro" id="IPR013440">
    <property type="entry name" value="TNase"/>
</dbReference>
<dbReference type="InterPro" id="IPR018176">
    <property type="entry name" value="Tryptophanase_CS"/>
</dbReference>
<dbReference type="NCBIfam" id="NF009709">
    <property type="entry name" value="PRK13238.1"/>
    <property type="match status" value="1"/>
</dbReference>
<dbReference type="NCBIfam" id="TIGR02617">
    <property type="entry name" value="tnaA_trp_ase"/>
    <property type="match status" value="1"/>
</dbReference>
<dbReference type="PANTHER" id="PTHR32325">
    <property type="entry name" value="BETA-ELIMINATING LYASE-LIKE PROTEIN-RELATED"/>
    <property type="match status" value="1"/>
</dbReference>
<dbReference type="PANTHER" id="PTHR32325:SF4">
    <property type="entry name" value="TRYPTOPHANASE"/>
    <property type="match status" value="1"/>
</dbReference>
<dbReference type="Pfam" id="PF01212">
    <property type="entry name" value="Beta_elim_lyase"/>
    <property type="match status" value="1"/>
</dbReference>
<dbReference type="PIRSF" id="PIRSF001386">
    <property type="entry name" value="Trpase"/>
    <property type="match status" value="1"/>
</dbReference>
<dbReference type="SUPFAM" id="SSF53383">
    <property type="entry name" value="PLP-dependent transferases"/>
    <property type="match status" value="1"/>
</dbReference>
<dbReference type="PROSITE" id="PS00853">
    <property type="entry name" value="BETA_ELIM_LYASE"/>
    <property type="match status" value="1"/>
</dbReference>
<sequence>MDNFKHLPEPFRIRVIEPVKRTTREYREEAILKAGMNPFLLDSEDVFIDLLTDSGTGAITQDMQAAMFRGDEAYSGSRSYHALANAVKDIFGYEFTIPTHQGRGAEQIYIPVLIKKREIEKGLDRSKMVALSNYFFDTTQGHTQINCCVAKNVYTEEAFDTGVKADFKGNFDLEKLEEAILEAGPANVPYIVSTITCNSAGGQPVSLANLKAVYEIAKRYDIPVIMDSARFAENAYFIQQREKDYQNWSIEEITRESYKYADGLAMSAKKDAMVQMGGLLCFKDESFLDVYTECRTLCVVQEGFPTYGGLEGGAMERLAVGLYDGMRQDWLAYRINQVEYLVNGLESIGVVCQQAGGHAAFVDAGKLLPHIPADQFPAHALACELYKVAGIRAVEIGSLLLGRDPATGKQHPCPAELLRLTIPRATYTQTHMDFIIEAFGKVKANAANVKGLEFTYEPQVLRHFTARLKEIDA</sequence>
<evidence type="ECO:0000255" key="1">
    <source>
        <dbReference type="HAMAP-Rule" id="MF_00544"/>
    </source>
</evidence>
<keyword id="KW-0456">Lyase</keyword>
<keyword id="KW-0663">Pyridoxal phosphate</keyword>
<keyword id="KW-0823">Tryptophan catabolism</keyword>